<proteinExistence type="evidence at transcript level"/>
<gene>
    <name type="primary">ANXA2</name>
    <name type="synonym">ANX2</name>
</gene>
<reference key="1">
    <citation type="journal article" date="2007" name="Mol. Genet. Genomics">
        <title>Identification of differentially expressed genes in the developing antler of red deer Cervus elaphus.</title>
        <authorList>
            <person name="Molnar A."/>
            <person name="Gyurjan I."/>
            <person name="Korpos E."/>
            <person name="Borsy A."/>
            <person name="Steger V."/>
            <person name="Buzas Z."/>
            <person name="Kiss I."/>
            <person name="Zomborszky Z."/>
            <person name="Papp P."/>
            <person name="Deak F."/>
            <person name="Orosz L."/>
        </authorList>
    </citation>
    <scope>NUCLEOTIDE SEQUENCE [MRNA]</scope>
    <scope>TISSUE SPECIFICITY</scope>
</reference>
<keyword id="KW-0007">Acetylation</keyword>
<keyword id="KW-0041">Annexin</keyword>
<keyword id="KW-0084">Basement membrane</keyword>
<keyword id="KW-0106">Calcium</keyword>
<keyword id="KW-0111">Calcium/phospholipid-binding</keyword>
<keyword id="KW-0272">Extracellular matrix</keyword>
<keyword id="KW-1017">Isopeptide bond</keyword>
<keyword id="KW-0597">Phosphoprotein</keyword>
<keyword id="KW-0677">Repeat</keyword>
<keyword id="KW-0964">Secreted</keyword>
<keyword id="KW-0832">Ubl conjugation</keyword>
<sequence>MSTVHEILCKLSLEGDHSTPPSAYGSVKAYTNFDAERDALNIETAIKTKGVDEVTIVNILTNRSNEQRQDIAFAYQRRTKKELASALKSALSGHLETVILGLLKTPAQYDASELKASMKGLGTDEDSLIEIICSRTNQELQEINRVYKEMYKTDLEKDIVSDTSGDFRKLMVALAKGRRAEDGSVIDYELIDQDARDLYDAGVKXKXTDVPKWISIMTERSVCHLQKVFERYKSYSPYDMLESIKKEVKGDLENAFLNLVQCIQNKPLYFADRLYDSMKGKGTRDKVLIRIMVSRSEVDMLKIRSEFKKKYGKSLYYYIQQDTKGDYQKALLYLCGGDD</sequence>
<comment type="function">
    <text evidence="4 5">Calcium-regulated membrane-binding protein whose affinity for calcium is greatly enhanced by anionic phospholipids. It binds two calcium ions with high affinity. May be involved in heat-stress response. Inhibits PCSK9-enhanced LDLR degradation, probably reduces PCSK9 protein levels via a translational mechanism but also competes with LDLR for binding with PCSK9. Binds to endosomes damaged by phagocytosis of particulate wear debris and participates in endosomal membrane stabilization, thereby limiting NLRP3 inflammasome activation (By similarity). Required for endothelial cell surface plasmin generation and may support fibrinolytic surveillance and neoangiogenesis (By similarity).</text>
</comment>
<comment type="subunit">
    <text evidence="2 4 5 6">Heterotetramer containing 2 light chains of S100A10/p11 and 2 heavy chains of ANXA2/p36 (By similarity). Interacts with ATP1B1 (By similarity). Interacts with DYSF (By similarity). Interacts with COCH. Interacts (via repeat Annexin 1) with PCSK9 (via the C-terminal domain); the interaction inhibits the degradation of LDLR. Interacts with CEACAM1 (via the cytoplasmic domain); this interaction is regulated by phosphorylation of CEACAM1 (By similarity). Interacts with APPL2 and APPL1; targets APPL2 to endosomes and acting in parallel to RAB5A (By similarity). Interacts with S100A4 (By similarity). May interact with UBAP2 (By similarity).</text>
</comment>
<comment type="subcellular location">
    <subcellularLocation>
        <location>Secreted</location>
        <location>Extracellular space</location>
        <location>Extracellular matrix</location>
        <location>Basement membrane</location>
    </subcellularLocation>
    <text evidence="1">In the lamina beneath the plasma membrane.</text>
</comment>
<comment type="tissue specificity">
    <text evidence="9">Expressed strongly in velvet antler reserve mesenchyme.</text>
</comment>
<comment type="domain">
    <text>A pair of annexin repeats may form one binding site for calcium and phospholipid.</text>
</comment>
<comment type="PTM">
    <text evidence="1">ISGylated.</text>
</comment>
<comment type="miscellaneous">
    <text>It may cross-link plasma membrane phospholipids with actin and the cytoskeleton and be involved with exocytosis.</text>
</comment>
<comment type="similarity">
    <text evidence="8 10">Belongs to the annexin family.</text>
</comment>
<comment type="online information" name="Protein Spotlight">
    <link uri="https://www.proteinspotlight.org/back_issues/086"/>
    <text>Red velvet - Issue 86 of September 2007</text>
</comment>
<accession>Q2Q1M6</accession>
<evidence type="ECO:0000250" key="1"/>
<evidence type="ECO:0000250" key="2">
    <source>
        <dbReference type="UniProtKB" id="A2SW69"/>
    </source>
</evidence>
<evidence type="ECO:0000250" key="3">
    <source>
        <dbReference type="UniProtKB" id="P04272"/>
    </source>
</evidence>
<evidence type="ECO:0000250" key="4">
    <source>
        <dbReference type="UniProtKB" id="P07355"/>
    </source>
</evidence>
<evidence type="ECO:0000250" key="5">
    <source>
        <dbReference type="UniProtKB" id="P07356"/>
    </source>
</evidence>
<evidence type="ECO:0000250" key="6">
    <source>
        <dbReference type="UniProtKB" id="Q6TEQ7"/>
    </source>
</evidence>
<evidence type="ECO:0000255" key="7"/>
<evidence type="ECO:0000255" key="8">
    <source>
        <dbReference type="PROSITE-ProRule" id="PRU01245"/>
    </source>
</evidence>
<evidence type="ECO:0000269" key="9">
    <source>
    </source>
</evidence>
<evidence type="ECO:0000305" key="10"/>
<feature type="initiator methionine" description="Removed" evidence="3">
    <location>
        <position position="1"/>
    </location>
</feature>
<feature type="chain" id="PRO_0000288685" description="Annexin A2">
    <location>
        <begin position="2"/>
        <end position="339"/>
    </location>
</feature>
<feature type="repeat" description="Annexin 1" evidence="8">
    <location>
        <begin position="33"/>
        <end position="104"/>
    </location>
</feature>
<feature type="repeat" description="Annexin 2" evidence="8">
    <location>
        <begin position="105"/>
        <end position="176"/>
    </location>
</feature>
<feature type="repeat" description="Annexin 3" evidence="8">
    <location>
        <begin position="189"/>
        <end position="261"/>
    </location>
</feature>
<feature type="repeat" description="Annexin 4" evidence="8">
    <location>
        <begin position="265"/>
        <end position="336"/>
    </location>
</feature>
<feature type="region of interest" description="S100A10-binding site" evidence="7">
    <location>
        <begin position="2"/>
        <end position="24"/>
    </location>
</feature>
<feature type="modified residue" description="N-acetylserine" evidence="3">
    <location>
        <position position="2"/>
    </location>
</feature>
<feature type="modified residue" description="Phosphotyrosine; by SRC" evidence="4">
    <location>
        <position position="24"/>
    </location>
</feature>
<feature type="modified residue" description="Phosphoserine; by PKC" evidence="4">
    <location>
        <position position="26"/>
    </location>
</feature>
<feature type="modified residue" description="N6-acetyllysine; alternate" evidence="5">
    <location>
        <position position="49"/>
    </location>
</feature>
<feature type="modified residue" description="N6-acetyllysine" evidence="5">
    <location>
        <position position="152"/>
    </location>
</feature>
<feature type="modified residue" description="Phosphoserine" evidence="4">
    <location>
        <position position="184"/>
    </location>
</feature>
<feature type="modified residue" description="Phosphotyrosine" evidence="5">
    <location>
        <position position="199"/>
    </location>
</feature>
<feature type="modified residue" description="N6-acetyllysine" evidence="5">
    <location>
        <position position="227"/>
    </location>
</feature>
<feature type="cross-link" description="Glycyl lysine isopeptide (Lys-Gly) (interchain with G-Cter in SUMO1); alternate" evidence="4">
    <location>
        <position position="49"/>
    </location>
</feature>
<feature type="cross-link" description="Glycyl lysine isopeptide (Lys-Gly) (interchain with G-Cter in SUMO2); alternate" evidence="4">
    <location>
        <position position="49"/>
    </location>
</feature>
<protein>
    <recommendedName>
        <fullName>Annexin A2</fullName>
    </recommendedName>
    <alternativeName>
        <fullName>Annexin-2</fullName>
    </alternativeName>
</protein>
<name>ANXA2_CEREL</name>
<organism>
    <name type="scientific">Cervus elaphus</name>
    <name type="common">Red deer</name>
    <dbReference type="NCBI Taxonomy" id="9860"/>
    <lineage>
        <taxon>Eukaryota</taxon>
        <taxon>Metazoa</taxon>
        <taxon>Chordata</taxon>
        <taxon>Craniata</taxon>
        <taxon>Vertebrata</taxon>
        <taxon>Euteleostomi</taxon>
        <taxon>Mammalia</taxon>
        <taxon>Eutheria</taxon>
        <taxon>Laurasiatheria</taxon>
        <taxon>Artiodactyla</taxon>
        <taxon>Ruminantia</taxon>
        <taxon>Pecora</taxon>
        <taxon>Cervidae</taxon>
        <taxon>Cervinae</taxon>
        <taxon>Cervus</taxon>
    </lineage>
</organism>
<dbReference type="EMBL" id="DQ239920">
    <property type="protein sequence ID" value="ABB77206.1"/>
    <property type="molecule type" value="mRNA"/>
</dbReference>
<dbReference type="GO" id="GO:0005604">
    <property type="term" value="C:basement membrane"/>
    <property type="evidence" value="ECO:0007669"/>
    <property type="project" value="UniProtKB-SubCell"/>
</dbReference>
<dbReference type="GO" id="GO:0005737">
    <property type="term" value="C:cytoplasm"/>
    <property type="evidence" value="ECO:0000250"/>
    <property type="project" value="UniProtKB"/>
</dbReference>
<dbReference type="GO" id="GO:0005768">
    <property type="term" value="C:endosome"/>
    <property type="evidence" value="ECO:0000250"/>
    <property type="project" value="UniProtKB"/>
</dbReference>
<dbReference type="GO" id="GO:0005576">
    <property type="term" value="C:extracellular region"/>
    <property type="evidence" value="ECO:0007669"/>
    <property type="project" value="UniProtKB-KW"/>
</dbReference>
<dbReference type="GO" id="GO:0005634">
    <property type="term" value="C:nucleus"/>
    <property type="evidence" value="ECO:0007669"/>
    <property type="project" value="TreeGrafter"/>
</dbReference>
<dbReference type="GO" id="GO:0005886">
    <property type="term" value="C:plasma membrane"/>
    <property type="evidence" value="ECO:0007669"/>
    <property type="project" value="TreeGrafter"/>
</dbReference>
<dbReference type="GO" id="GO:0012506">
    <property type="term" value="C:vesicle membrane"/>
    <property type="evidence" value="ECO:0007669"/>
    <property type="project" value="TreeGrafter"/>
</dbReference>
<dbReference type="GO" id="GO:0005509">
    <property type="term" value="F:calcium ion binding"/>
    <property type="evidence" value="ECO:0007669"/>
    <property type="project" value="InterPro"/>
</dbReference>
<dbReference type="GO" id="GO:0005544">
    <property type="term" value="F:calcium-dependent phospholipid binding"/>
    <property type="evidence" value="ECO:0007669"/>
    <property type="project" value="UniProtKB-KW"/>
</dbReference>
<dbReference type="GO" id="GO:0008092">
    <property type="term" value="F:cytoskeletal protein binding"/>
    <property type="evidence" value="ECO:0007669"/>
    <property type="project" value="InterPro"/>
</dbReference>
<dbReference type="GO" id="GO:0001786">
    <property type="term" value="F:phosphatidylserine binding"/>
    <property type="evidence" value="ECO:0007669"/>
    <property type="project" value="TreeGrafter"/>
</dbReference>
<dbReference type="GO" id="GO:0004859">
    <property type="term" value="F:phospholipase inhibitor activity"/>
    <property type="evidence" value="ECO:0007669"/>
    <property type="project" value="InterPro"/>
</dbReference>
<dbReference type="GO" id="GO:1905602">
    <property type="term" value="P:positive regulation of receptor-mediated endocytosis involved in cholesterol transport"/>
    <property type="evidence" value="ECO:0007669"/>
    <property type="project" value="TreeGrafter"/>
</dbReference>
<dbReference type="FunFam" id="1.10.220.10:FF:000001">
    <property type="entry name" value="Annexin"/>
    <property type="match status" value="1"/>
</dbReference>
<dbReference type="FunFam" id="1.10.220.10:FF:000002">
    <property type="entry name" value="Annexin"/>
    <property type="match status" value="1"/>
</dbReference>
<dbReference type="FunFam" id="1.10.220.10:FF:000003">
    <property type="entry name" value="Annexin"/>
    <property type="match status" value="1"/>
</dbReference>
<dbReference type="FunFam" id="1.10.220.10:FF:000007">
    <property type="entry name" value="Annexin"/>
    <property type="match status" value="1"/>
</dbReference>
<dbReference type="Gene3D" id="1.10.220.10">
    <property type="entry name" value="Annexin"/>
    <property type="match status" value="4"/>
</dbReference>
<dbReference type="InterPro" id="IPR001464">
    <property type="entry name" value="Annexin"/>
</dbReference>
<dbReference type="InterPro" id="IPR018502">
    <property type="entry name" value="Annexin_repeat"/>
</dbReference>
<dbReference type="InterPro" id="IPR018252">
    <property type="entry name" value="Annexin_repeat_CS"/>
</dbReference>
<dbReference type="InterPro" id="IPR037104">
    <property type="entry name" value="Annexin_sf"/>
</dbReference>
<dbReference type="InterPro" id="IPR002389">
    <property type="entry name" value="ANX2"/>
</dbReference>
<dbReference type="PANTHER" id="PTHR10502">
    <property type="entry name" value="ANNEXIN"/>
    <property type="match status" value="1"/>
</dbReference>
<dbReference type="PANTHER" id="PTHR10502:SF18">
    <property type="entry name" value="ANNEXIN A2-RELATED"/>
    <property type="match status" value="1"/>
</dbReference>
<dbReference type="Pfam" id="PF00191">
    <property type="entry name" value="Annexin"/>
    <property type="match status" value="4"/>
</dbReference>
<dbReference type="PRINTS" id="PR00196">
    <property type="entry name" value="ANNEXIN"/>
</dbReference>
<dbReference type="PRINTS" id="PR00198">
    <property type="entry name" value="ANNEXINII"/>
</dbReference>
<dbReference type="SMART" id="SM00335">
    <property type="entry name" value="ANX"/>
    <property type="match status" value="4"/>
</dbReference>
<dbReference type="SUPFAM" id="SSF47874">
    <property type="entry name" value="Annexin"/>
    <property type="match status" value="1"/>
</dbReference>
<dbReference type="PROSITE" id="PS00223">
    <property type="entry name" value="ANNEXIN_1"/>
    <property type="match status" value="4"/>
</dbReference>
<dbReference type="PROSITE" id="PS51897">
    <property type="entry name" value="ANNEXIN_2"/>
    <property type="match status" value="4"/>
</dbReference>